<dbReference type="EC" id="2.4.2.1" evidence="1"/>
<dbReference type="EC" id="2.4.2.2" evidence="1"/>
<dbReference type="EMBL" id="AP006618">
    <property type="protein sequence ID" value="BAD56417.1"/>
    <property type="molecule type" value="Genomic_DNA"/>
</dbReference>
<dbReference type="RefSeq" id="WP_011208102.1">
    <property type="nucleotide sequence ID" value="NC_006361.1"/>
</dbReference>
<dbReference type="SMR" id="Q5YZH4"/>
<dbReference type="STRING" id="247156.NFA_15710"/>
<dbReference type="GeneID" id="61132362"/>
<dbReference type="KEGG" id="nfa:NFA_15710"/>
<dbReference type="eggNOG" id="COG3123">
    <property type="taxonomic scope" value="Bacteria"/>
</dbReference>
<dbReference type="HOGENOM" id="CLU_157874_1_0_11"/>
<dbReference type="OrthoDB" id="9793848at2"/>
<dbReference type="Proteomes" id="UP000006820">
    <property type="component" value="Chromosome"/>
</dbReference>
<dbReference type="GO" id="GO:0005829">
    <property type="term" value="C:cytosol"/>
    <property type="evidence" value="ECO:0007669"/>
    <property type="project" value="TreeGrafter"/>
</dbReference>
<dbReference type="GO" id="GO:0047975">
    <property type="term" value="F:guanosine phosphorylase activity"/>
    <property type="evidence" value="ECO:0007669"/>
    <property type="project" value="UniProtKB-EC"/>
</dbReference>
<dbReference type="GO" id="GO:0004731">
    <property type="term" value="F:purine-nucleoside phosphorylase activity"/>
    <property type="evidence" value="ECO:0007669"/>
    <property type="project" value="UniProtKB-UniRule"/>
</dbReference>
<dbReference type="GO" id="GO:0009032">
    <property type="term" value="F:thymidine phosphorylase activity"/>
    <property type="evidence" value="ECO:0007669"/>
    <property type="project" value="UniProtKB-EC"/>
</dbReference>
<dbReference type="GO" id="GO:0004850">
    <property type="term" value="F:uridine phosphorylase activity"/>
    <property type="evidence" value="ECO:0007669"/>
    <property type="project" value="UniProtKB-EC"/>
</dbReference>
<dbReference type="CDD" id="cd20296">
    <property type="entry name" value="cupin_PpnP-like"/>
    <property type="match status" value="1"/>
</dbReference>
<dbReference type="Gene3D" id="2.60.120.10">
    <property type="entry name" value="Jelly Rolls"/>
    <property type="match status" value="1"/>
</dbReference>
<dbReference type="HAMAP" id="MF_01537">
    <property type="entry name" value="Nucleos_phosphorylase_PpnP"/>
    <property type="match status" value="1"/>
</dbReference>
<dbReference type="InterPro" id="IPR009664">
    <property type="entry name" value="Ppnp"/>
</dbReference>
<dbReference type="InterPro" id="IPR014710">
    <property type="entry name" value="RmlC-like_jellyroll"/>
</dbReference>
<dbReference type="InterPro" id="IPR011051">
    <property type="entry name" value="RmlC_Cupin_sf"/>
</dbReference>
<dbReference type="PANTHER" id="PTHR36540">
    <property type="entry name" value="PYRIMIDINE/PURINE NUCLEOSIDE PHOSPHORYLASE"/>
    <property type="match status" value="1"/>
</dbReference>
<dbReference type="PANTHER" id="PTHR36540:SF1">
    <property type="entry name" value="PYRIMIDINE_PURINE NUCLEOSIDE PHOSPHORYLASE"/>
    <property type="match status" value="1"/>
</dbReference>
<dbReference type="Pfam" id="PF06865">
    <property type="entry name" value="Ppnp"/>
    <property type="match status" value="1"/>
</dbReference>
<dbReference type="SUPFAM" id="SSF51182">
    <property type="entry name" value="RmlC-like cupins"/>
    <property type="match status" value="1"/>
</dbReference>
<organism>
    <name type="scientific">Nocardia farcinica (strain IFM 10152)</name>
    <dbReference type="NCBI Taxonomy" id="247156"/>
    <lineage>
        <taxon>Bacteria</taxon>
        <taxon>Bacillati</taxon>
        <taxon>Actinomycetota</taxon>
        <taxon>Actinomycetes</taxon>
        <taxon>Mycobacteriales</taxon>
        <taxon>Nocardiaceae</taxon>
        <taxon>Nocardia</taxon>
    </lineage>
</organism>
<sequence length="103" mass="11011">MSKFENVSVAKKANVYFDGACVSHSIEFPDGTAKSVGVILPATLTFGTTAPEVMELVEGHCRVTLPGADAPVTFRGGESFEVPADSEFTIEVLETVHYVCHYG</sequence>
<name>PPNP_NOCFA</name>
<gene>
    <name evidence="1" type="primary">ppnP</name>
    <name type="ordered locus">NFA_15710</name>
</gene>
<protein>
    <recommendedName>
        <fullName evidence="1">Pyrimidine/purine nucleoside phosphorylase</fullName>
        <ecNumber evidence="1">2.4.2.1</ecNumber>
        <ecNumber evidence="1">2.4.2.2</ecNumber>
    </recommendedName>
    <alternativeName>
        <fullName evidence="1">Adenosine phosphorylase</fullName>
    </alternativeName>
    <alternativeName>
        <fullName evidence="1">Cytidine phosphorylase</fullName>
    </alternativeName>
    <alternativeName>
        <fullName evidence="1">Guanosine phosphorylase</fullName>
    </alternativeName>
    <alternativeName>
        <fullName evidence="1">Inosine phosphorylase</fullName>
    </alternativeName>
    <alternativeName>
        <fullName evidence="1">Thymidine phosphorylase</fullName>
    </alternativeName>
    <alternativeName>
        <fullName evidence="1">Uridine phosphorylase</fullName>
    </alternativeName>
    <alternativeName>
        <fullName evidence="1">Xanthosine phosphorylase</fullName>
    </alternativeName>
</protein>
<feature type="chain" id="PRO_0000211771" description="Pyrimidine/purine nucleoside phosphorylase">
    <location>
        <begin position="1"/>
        <end position="103"/>
    </location>
</feature>
<evidence type="ECO:0000255" key="1">
    <source>
        <dbReference type="HAMAP-Rule" id="MF_01537"/>
    </source>
</evidence>
<proteinExistence type="inferred from homology"/>
<reference key="1">
    <citation type="journal article" date="2004" name="Proc. Natl. Acad. Sci. U.S.A.">
        <title>The complete genomic sequence of Nocardia farcinica IFM 10152.</title>
        <authorList>
            <person name="Ishikawa J."/>
            <person name="Yamashita A."/>
            <person name="Mikami Y."/>
            <person name="Hoshino Y."/>
            <person name="Kurita H."/>
            <person name="Hotta K."/>
            <person name="Shiba T."/>
            <person name="Hattori M."/>
        </authorList>
    </citation>
    <scope>NUCLEOTIDE SEQUENCE [LARGE SCALE GENOMIC DNA]</scope>
    <source>
        <strain>IFM 10152</strain>
    </source>
</reference>
<comment type="function">
    <text evidence="1">Catalyzes the phosphorolysis of diverse nucleosides, yielding D-ribose 1-phosphate and the respective free bases. Can use uridine, adenosine, guanosine, cytidine, thymidine, inosine and xanthosine as substrates. Also catalyzes the reverse reactions.</text>
</comment>
<comment type="catalytic activity">
    <reaction evidence="1">
        <text>a purine D-ribonucleoside + phosphate = a purine nucleobase + alpha-D-ribose 1-phosphate</text>
        <dbReference type="Rhea" id="RHEA:19805"/>
        <dbReference type="ChEBI" id="CHEBI:26386"/>
        <dbReference type="ChEBI" id="CHEBI:43474"/>
        <dbReference type="ChEBI" id="CHEBI:57720"/>
        <dbReference type="ChEBI" id="CHEBI:142355"/>
        <dbReference type="EC" id="2.4.2.1"/>
    </reaction>
</comment>
<comment type="catalytic activity">
    <reaction evidence="1">
        <text>adenosine + phosphate = alpha-D-ribose 1-phosphate + adenine</text>
        <dbReference type="Rhea" id="RHEA:27642"/>
        <dbReference type="ChEBI" id="CHEBI:16335"/>
        <dbReference type="ChEBI" id="CHEBI:16708"/>
        <dbReference type="ChEBI" id="CHEBI:43474"/>
        <dbReference type="ChEBI" id="CHEBI:57720"/>
        <dbReference type="EC" id="2.4.2.1"/>
    </reaction>
</comment>
<comment type="catalytic activity">
    <reaction evidence="1">
        <text>cytidine + phosphate = cytosine + alpha-D-ribose 1-phosphate</text>
        <dbReference type="Rhea" id="RHEA:52540"/>
        <dbReference type="ChEBI" id="CHEBI:16040"/>
        <dbReference type="ChEBI" id="CHEBI:17562"/>
        <dbReference type="ChEBI" id="CHEBI:43474"/>
        <dbReference type="ChEBI" id="CHEBI:57720"/>
        <dbReference type="EC" id="2.4.2.2"/>
    </reaction>
</comment>
<comment type="catalytic activity">
    <reaction evidence="1">
        <text>guanosine + phosphate = alpha-D-ribose 1-phosphate + guanine</text>
        <dbReference type="Rhea" id="RHEA:13233"/>
        <dbReference type="ChEBI" id="CHEBI:16235"/>
        <dbReference type="ChEBI" id="CHEBI:16750"/>
        <dbReference type="ChEBI" id="CHEBI:43474"/>
        <dbReference type="ChEBI" id="CHEBI:57720"/>
        <dbReference type="EC" id="2.4.2.1"/>
    </reaction>
</comment>
<comment type="catalytic activity">
    <reaction evidence="1">
        <text>inosine + phosphate = alpha-D-ribose 1-phosphate + hypoxanthine</text>
        <dbReference type="Rhea" id="RHEA:27646"/>
        <dbReference type="ChEBI" id="CHEBI:17368"/>
        <dbReference type="ChEBI" id="CHEBI:17596"/>
        <dbReference type="ChEBI" id="CHEBI:43474"/>
        <dbReference type="ChEBI" id="CHEBI:57720"/>
        <dbReference type="EC" id="2.4.2.1"/>
    </reaction>
</comment>
<comment type="catalytic activity">
    <reaction evidence="1">
        <text>thymidine + phosphate = 2-deoxy-alpha-D-ribose 1-phosphate + thymine</text>
        <dbReference type="Rhea" id="RHEA:16037"/>
        <dbReference type="ChEBI" id="CHEBI:17748"/>
        <dbReference type="ChEBI" id="CHEBI:17821"/>
        <dbReference type="ChEBI" id="CHEBI:43474"/>
        <dbReference type="ChEBI" id="CHEBI:57259"/>
        <dbReference type="EC" id="2.4.2.2"/>
    </reaction>
</comment>
<comment type="catalytic activity">
    <reaction evidence="1">
        <text>uridine + phosphate = alpha-D-ribose 1-phosphate + uracil</text>
        <dbReference type="Rhea" id="RHEA:24388"/>
        <dbReference type="ChEBI" id="CHEBI:16704"/>
        <dbReference type="ChEBI" id="CHEBI:17568"/>
        <dbReference type="ChEBI" id="CHEBI:43474"/>
        <dbReference type="ChEBI" id="CHEBI:57720"/>
        <dbReference type="EC" id="2.4.2.2"/>
    </reaction>
</comment>
<comment type="catalytic activity">
    <reaction evidence="1">
        <text>xanthosine + phosphate = alpha-D-ribose 1-phosphate + xanthine</text>
        <dbReference type="Rhea" id="RHEA:27638"/>
        <dbReference type="ChEBI" id="CHEBI:17712"/>
        <dbReference type="ChEBI" id="CHEBI:18107"/>
        <dbReference type="ChEBI" id="CHEBI:43474"/>
        <dbReference type="ChEBI" id="CHEBI:57720"/>
        <dbReference type="EC" id="2.4.2.1"/>
    </reaction>
</comment>
<comment type="similarity">
    <text evidence="1">Belongs to the nucleoside phosphorylase PpnP family.</text>
</comment>
<accession>Q5YZH4</accession>
<keyword id="KW-0328">Glycosyltransferase</keyword>
<keyword id="KW-1185">Reference proteome</keyword>
<keyword id="KW-0808">Transferase</keyword>